<keyword id="KW-0131">Cell cycle</keyword>
<keyword id="KW-0132">Cell division</keyword>
<keyword id="KW-0133">Cell shape</keyword>
<keyword id="KW-0961">Cell wall biogenesis/degradation</keyword>
<keyword id="KW-0963">Cytoplasm</keyword>
<keyword id="KW-0274">FAD</keyword>
<keyword id="KW-0285">Flavoprotein</keyword>
<keyword id="KW-0521">NADP</keyword>
<keyword id="KW-0560">Oxidoreductase</keyword>
<keyword id="KW-0573">Peptidoglycan synthesis</keyword>
<comment type="function">
    <text evidence="1">Cell wall formation.</text>
</comment>
<comment type="catalytic activity">
    <reaction evidence="1">
        <text>UDP-N-acetyl-alpha-D-muramate + NADP(+) = UDP-N-acetyl-3-O-(1-carboxyvinyl)-alpha-D-glucosamine + NADPH + H(+)</text>
        <dbReference type="Rhea" id="RHEA:12248"/>
        <dbReference type="ChEBI" id="CHEBI:15378"/>
        <dbReference type="ChEBI" id="CHEBI:57783"/>
        <dbReference type="ChEBI" id="CHEBI:58349"/>
        <dbReference type="ChEBI" id="CHEBI:68483"/>
        <dbReference type="ChEBI" id="CHEBI:70757"/>
        <dbReference type="EC" id="1.3.1.98"/>
    </reaction>
</comment>
<comment type="cofactor">
    <cofactor evidence="1">
        <name>FAD</name>
        <dbReference type="ChEBI" id="CHEBI:57692"/>
    </cofactor>
</comment>
<comment type="pathway">
    <text evidence="1">Cell wall biogenesis; peptidoglycan biosynthesis.</text>
</comment>
<comment type="subcellular location">
    <subcellularLocation>
        <location evidence="1">Cytoplasm</location>
    </subcellularLocation>
</comment>
<comment type="similarity">
    <text evidence="1">Belongs to the MurB family.</text>
</comment>
<proteinExistence type="inferred from homology"/>
<protein>
    <recommendedName>
        <fullName evidence="1">UDP-N-acetylenolpyruvoylglucosamine reductase</fullName>
        <ecNumber evidence="1">1.3.1.98</ecNumber>
    </recommendedName>
    <alternativeName>
        <fullName evidence="1">UDP-N-acetylmuramate dehydrogenase</fullName>
    </alternativeName>
</protein>
<dbReference type="EC" id="1.3.1.98" evidence="1"/>
<dbReference type="EMBL" id="CP000577">
    <property type="protein sequence ID" value="ABN75897.1"/>
    <property type="molecule type" value="Genomic_DNA"/>
</dbReference>
<dbReference type="RefSeq" id="WP_011840603.1">
    <property type="nucleotide sequence ID" value="NC_009049.1"/>
</dbReference>
<dbReference type="SMR" id="A3PHT1"/>
<dbReference type="KEGG" id="rsh:Rsph17029_0786"/>
<dbReference type="HOGENOM" id="CLU_035304_1_0_5"/>
<dbReference type="UniPathway" id="UPA00219"/>
<dbReference type="GO" id="GO:0005829">
    <property type="term" value="C:cytosol"/>
    <property type="evidence" value="ECO:0007669"/>
    <property type="project" value="TreeGrafter"/>
</dbReference>
<dbReference type="GO" id="GO:0071949">
    <property type="term" value="F:FAD binding"/>
    <property type="evidence" value="ECO:0007669"/>
    <property type="project" value="InterPro"/>
</dbReference>
<dbReference type="GO" id="GO:0008762">
    <property type="term" value="F:UDP-N-acetylmuramate dehydrogenase activity"/>
    <property type="evidence" value="ECO:0007669"/>
    <property type="project" value="UniProtKB-UniRule"/>
</dbReference>
<dbReference type="GO" id="GO:0051301">
    <property type="term" value="P:cell division"/>
    <property type="evidence" value="ECO:0007669"/>
    <property type="project" value="UniProtKB-KW"/>
</dbReference>
<dbReference type="GO" id="GO:0071555">
    <property type="term" value="P:cell wall organization"/>
    <property type="evidence" value="ECO:0007669"/>
    <property type="project" value="UniProtKB-KW"/>
</dbReference>
<dbReference type="GO" id="GO:0009252">
    <property type="term" value="P:peptidoglycan biosynthetic process"/>
    <property type="evidence" value="ECO:0007669"/>
    <property type="project" value="UniProtKB-UniRule"/>
</dbReference>
<dbReference type="GO" id="GO:0008360">
    <property type="term" value="P:regulation of cell shape"/>
    <property type="evidence" value="ECO:0007669"/>
    <property type="project" value="UniProtKB-KW"/>
</dbReference>
<dbReference type="Gene3D" id="3.30.465.10">
    <property type="match status" value="1"/>
</dbReference>
<dbReference type="Gene3D" id="3.90.78.10">
    <property type="entry name" value="UDP-N-acetylenolpyruvoylglucosamine reductase, C-terminal domain"/>
    <property type="match status" value="1"/>
</dbReference>
<dbReference type="Gene3D" id="3.30.43.10">
    <property type="entry name" value="Uridine Diphospho-n-acetylenolpyruvylglucosamine Reductase, domain 2"/>
    <property type="match status" value="1"/>
</dbReference>
<dbReference type="HAMAP" id="MF_00037">
    <property type="entry name" value="MurB"/>
    <property type="match status" value="1"/>
</dbReference>
<dbReference type="InterPro" id="IPR016166">
    <property type="entry name" value="FAD-bd_PCMH"/>
</dbReference>
<dbReference type="InterPro" id="IPR036318">
    <property type="entry name" value="FAD-bd_PCMH-like_sf"/>
</dbReference>
<dbReference type="InterPro" id="IPR016167">
    <property type="entry name" value="FAD-bd_PCMH_sub1"/>
</dbReference>
<dbReference type="InterPro" id="IPR016169">
    <property type="entry name" value="FAD-bd_PCMH_sub2"/>
</dbReference>
<dbReference type="InterPro" id="IPR003170">
    <property type="entry name" value="MurB"/>
</dbReference>
<dbReference type="InterPro" id="IPR011601">
    <property type="entry name" value="MurB_C"/>
</dbReference>
<dbReference type="InterPro" id="IPR036635">
    <property type="entry name" value="MurB_C_sf"/>
</dbReference>
<dbReference type="InterPro" id="IPR006094">
    <property type="entry name" value="Oxid_FAD_bind_N"/>
</dbReference>
<dbReference type="NCBIfam" id="TIGR00179">
    <property type="entry name" value="murB"/>
    <property type="match status" value="1"/>
</dbReference>
<dbReference type="NCBIfam" id="NF010480">
    <property type="entry name" value="PRK13905.1"/>
    <property type="match status" value="1"/>
</dbReference>
<dbReference type="PANTHER" id="PTHR21071">
    <property type="entry name" value="UDP-N-ACETYLENOLPYRUVOYLGLUCOSAMINE REDUCTASE"/>
    <property type="match status" value="1"/>
</dbReference>
<dbReference type="PANTHER" id="PTHR21071:SF4">
    <property type="entry name" value="UDP-N-ACETYLENOLPYRUVOYLGLUCOSAMINE REDUCTASE"/>
    <property type="match status" value="1"/>
</dbReference>
<dbReference type="Pfam" id="PF01565">
    <property type="entry name" value="FAD_binding_4"/>
    <property type="match status" value="1"/>
</dbReference>
<dbReference type="Pfam" id="PF02873">
    <property type="entry name" value="MurB_C"/>
    <property type="match status" value="1"/>
</dbReference>
<dbReference type="SUPFAM" id="SSF56176">
    <property type="entry name" value="FAD-binding/transporter-associated domain-like"/>
    <property type="match status" value="1"/>
</dbReference>
<dbReference type="SUPFAM" id="SSF56194">
    <property type="entry name" value="Uridine diphospho-N-Acetylenolpyruvylglucosamine reductase, MurB, C-terminal domain"/>
    <property type="match status" value="1"/>
</dbReference>
<dbReference type="PROSITE" id="PS51387">
    <property type="entry name" value="FAD_PCMH"/>
    <property type="match status" value="1"/>
</dbReference>
<organism>
    <name type="scientific">Cereibacter sphaeroides (strain ATCC 17029 / ATH 2.4.9)</name>
    <name type="common">Rhodobacter sphaeroides</name>
    <dbReference type="NCBI Taxonomy" id="349101"/>
    <lineage>
        <taxon>Bacteria</taxon>
        <taxon>Pseudomonadati</taxon>
        <taxon>Pseudomonadota</taxon>
        <taxon>Alphaproteobacteria</taxon>
        <taxon>Rhodobacterales</taxon>
        <taxon>Paracoccaceae</taxon>
        <taxon>Cereibacter</taxon>
    </lineage>
</organism>
<gene>
    <name evidence="1" type="primary">murB</name>
    <name type="ordered locus">Rsph17029_0786</name>
</gene>
<evidence type="ECO:0000255" key="1">
    <source>
        <dbReference type="HAMAP-Rule" id="MF_00037"/>
    </source>
</evidence>
<evidence type="ECO:0000256" key="2">
    <source>
        <dbReference type="SAM" id="MobiDB-lite"/>
    </source>
</evidence>
<accession>A3PHT1</accession>
<feature type="chain" id="PRO_1000002905" description="UDP-N-acetylenolpyruvoylglucosamine reductase">
    <location>
        <begin position="1"/>
        <end position="308"/>
    </location>
</feature>
<feature type="domain" description="FAD-binding PCMH-type" evidence="1">
    <location>
        <begin position="22"/>
        <end position="185"/>
    </location>
</feature>
<feature type="region of interest" description="Disordered" evidence="2">
    <location>
        <begin position="197"/>
        <end position="228"/>
    </location>
</feature>
<feature type="compositionally biased region" description="Basic and acidic residues" evidence="2">
    <location>
        <begin position="197"/>
        <end position="211"/>
    </location>
</feature>
<feature type="compositionally biased region" description="Polar residues" evidence="2">
    <location>
        <begin position="212"/>
        <end position="226"/>
    </location>
</feature>
<feature type="active site" evidence="1">
    <location>
        <position position="165"/>
    </location>
</feature>
<feature type="active site" description="Proton donor" evidence="1">
    <location>
        <position position="214"/>
    </location>
</feature>
<feature type="active site" evidence="1">
    <location>
        <position position="296"/>
    </location>
</feature>
<name>MURB_CERS1</name>
<sequence>MMPPVRGTLTQGRILADLTWLRVGGPADWLFQPADEADLVQFLGALDPAVPVFPMGVGSNLIVRDGGLRAVVIRLGRGFNAIRIEGDRVIAGAAALDAHVARRAAEAGRDLTFLRTIPGSIGGAVRMNAGCYGSYVADHLIEVRAVTREGRAVTLPAAELGLAYRQSALPEGCVLTEATFRAEAGDPAELARRMDEQIARRDSSQPTKERSAGSTFRNPAGFSSTGRADDTHELKAWKLIDEAGLRGARRGGAQMSEMHSNFLINAGGATAADLEGLGEEVIKRVFQSSGIRLEWEIMRVGELPVNKE</sequence>
<reference key="1">
    <citation type="submission" date="2007-02" db="EMBL/GenBank/DDBJ databases">
        <title>Complete sequence of chromosome 1 of Rhodobacter sphaeroides ATCC 17029.</title>
        <authorList>
            <person name="Copeland A."/>
            <person name="Lucas S."/>
            <person name="Lapidus A."/>
            <person name="Barry K."/>
            <person name="Detter J.C."/>
            <person name="Glavina del Rio T."/>
            <person name="Hammon N."/>
            <person name="Israni S."/>
            <person name="Dalin E."/>
            <person name="Tice H."/>
            <person name="Pitluck S."/>
            <person name="Kiss H."/>
            <person name="Brettin T."/>
            <person name="Bruce D."/>
            <person name="Han C."/>
            <person name="Tapia R."/>
            <person name="Gilna P."/>
            <person name="Schmutz J."/>
            <person name="Larimer F."/>
            <person name="Land M."/>
            <person name="Hauser L."/>
            <person name="Kyrpides N."/>
            <person name="Mikhailova N."/>
            <person name="Richardson P."/>
            <person name="Mackenzie C."/>
            <person name="Choudhary M."/>
            <person name="Donohue T.J."/>
            <person name="Kaplan S."/>
        </authorList>
    </citation>
    <scope>NUCLEOTIDE SEQUENCE [LARGE SCALE GENOMIC DNA]</scope>
    <source>
        <strain>ATCC 17029 / ATH 2.4.9</strain>
    </source>
</reference>